<dbReference type="EMBL" id="CP000792">
    <property type="protein sequence ID" value="EAT98153.1"/>
    <property type="molecule type" value="Genomic_DNA"/>
</dbReference>
<dbReference type="RefSeq" id="WP_012140545.1">
    <property type="nucleotide sequence ID" value="NC_009802.2"/>
</dbReference>
<dbReference type="SMR" id="A7ZFX5"/>
<dbReference type="STRING" id="360104.CCC13826_1738"/>
<dbReference type="KEGG" id="cco:CCC13826_1738"/>
<dbReference type="eggNOG" id="COG0718">
    <property type="taxonomic scope" value="Bacteria"/>
</dbReference>
<dbReference type="HOGENOM" id="CLU_140930_2_1_7"/>
<dbReference type="OrthoDB" id="5343857at2"/>
<dbReference type="Proteomes" id="UP000001121">
    <property type="component" value="Chromosome"/>
</dbReference>
<dbReference type="GO" id="GO:0043590">
    <property type="term" value="C:bacterial nucleoid"/>
    <property type="evidence" value="ECO:0007669"/>
    <property type="project" value="UniProtKB-UniRule"/>
</dbReference>
<dbReference type="GO" id="GO:0005829">
    <property type="term" value="C:cytosol"/>
    <property type="evidence" value="ECO:0007669"/>
    <property type="project" value="TreeGrafter"/>
</dbReference>
<dbReference type="GO" id="GO:0003677">
    <property type="term" value="F:DNA binding"/>
    <property type="evidence" value="ECO:0007669"/>
    <property type="project" value="UniProtKB-UniRule"/>
</dbReference>
<dbReference type="Gene3D" id="3.30.1310.10">
    <property type="entry name" value="Nucleoid-associated protein YbaB-like domain"/>
    <property type="match status" value="1"/>
</dbReference>
<dbReference type="HAMAP" id="MF_00274">
    <property type="entry name" value="DNA_YbaB_EbfC"/>
    <property type="match status" value="1"/>
</dbReference>
<dbReference type="InterPro" id="IPR036894">
    <property type="entry name" value="YbaB-like_sf"/>
</dbReference>
<dbReference type="InterPro" id="IPR004401">
    <property type="entry name" value="YbaB/EbfC"/>
</dbReference>
<dbReference type="NCBIfam" id="TIGR00103">
    <property type="entry name" value="DNA_YbaB_EbfC"/>
    <property type="match status" value="1"/>
</dbReference>
<dbReference type="PANTHER" id="PTHR33449">
    <property type="entry name" value="NUCLEOID-ASSOCIATED PROTEIN YBAB"/>
    <property type="match status" value="1"/>
</dbReference>
<dbReference type="PANTHER" id="PTHR33449:SF1">
    <property type="entry name" value="NUCLEOID-ASSOCIATED PROTEIN YBAB"/>
    <property type="match status" value="1"/>
</dbReference>
<dbReference type="Pfam" id="PF02575">
    <property type="entry name" value="YbaB_DNA_bd"/>
    <property type="match status" value="1"/>
</dbReference>
<dbReference type="PIRSF" id="PIRSF004555">
    <property type="entry name" value="UCP004555"/>
    <property type="match status" value="1"/>
</dbReference>
<dbReference type="SUPFAM" id="SSF82607">
    <property type="entry name" value="YbaB-like"/>
    <property type="match status" value="1"/>
</dbReference>
<proteinExistence type="inferred from homology"/>
<accession>A7ZFX5</accession>
<name>Y1848_CAMC1</name>
<keyword id="KW-0963">Cytoplasm</keyword>
<keyword id="KW-0238">DNA-binding</keyword>
<evidence type="ECO:0000255" key="1">
    <source>
        <dbReference type="HAMAP-Rule" id="MF_00274"/>
    </source>
</evidence>
<evidence type="ECO:0000256" key="2">
    <source>
        <dbReference type="SAM" id="MobiDB-lite"/>
    </source>
</evidence>
<comment type="function">
    <text evidence="1">Binds to DNA and alters its conformation. May be involved in regulation of gene expression, nucleoid organization and DNA protection.</text>
</comment>
<comment type="subunit">
    <text evidence="1">Homodimer.</text>
</comment>
<comment type="subcellular location">
    <subcellularLocation>
        <location evidence="1">Cytoplasm</location>
        <location evidence="1">Nucleoid</location>
    </subcellularLocation>
</comment>
<comment type="similarity">
    <text evidence="1">Belongs to the YbaB/EbfC family.</text>
</comment>
<protein>
    <recommendedName>
        <fullName evidence="1">Nucleoid-associated protein Ccon26_18480</fullName>
    </recommendedName>
</protein>
<sequence length="104" mass="11247">MFEGFDFSKMGQMLEDVQKQAKQMEEESKNKEFGAKSGGGLVSVRANGSGEILDISIDDSLLEDKESMQILLISAINDVLKSVEADKKNTASRMLGGLASMGIK</sequence>
<gene>
    <name type="ordered locus">Ccon26_18480</name>
    <name type="ORF">CCC13826_1738</name>
</gene>
<feature type="chain" id="PRO_1000003715" description="Nucleoid-associated protein Ccon26_18480">
    <location>
        <begin position="1"/>
        <end position="104"/>
    </location>
</feature>
<feature type="region of interest" description="Disordered" evidence="2">
    <location>
        <begin position="16"/>
        <end position="38"/>
    </location>
</feature>
<feature type="compositionally biased region" description="Basic and acidic residues" evidence="2">
    <location>
        <begin position="16"/>
        <end position="34"/>
    </location>
</feature>
<reference key="1">
    <citation type="submission" date="2007-10" db="EMBL/GenBank/DDBJ databases">
        <title>Genome sequence of Campylobacter concisus 13826 isolated from human feces.</title>
        <authorList>
            <person name="Fouts D.E."/>
            <person name="Mongodin E.F."/>
            <person name="Puiu D."/>
            <person name="Sebastian Y."/>
            <person name="Miller W.G."/>
            <person name="Mandrell R.E."/>
            <person name="On S."/>
            <person name="Nelson K.E."/>
        </authorList>
    </citation>
    <scope>NUCLEOTIDE SEQUENCE [LARGE SCALE GENOMIC DNA]</scope>
    <source>
        <strain>13826</strain>
    </source>
</reference>
<organism>
    <name type="scientific">Campylobacter concisus (strain 13826)</name>
    <dbReference type="NCBI Taxonomy" id="360104"/>
    <lineage>
        <taxon>Bacteria</taxon>
        <taxon>Pseudomonadati</taxon>
        <taxon>Campylobacterota</taxon>
        <taxon>Epsilonproteobacteria</taxon>
        <taxon>Campylobacterales</taxon>
        <taxon>Campylobacteraceae</taxon>
        <taxon>Campylobacter</taxon>
    </lineage>
</organism>